<evidence type="ECO:0000255" key="1">
    <source>
        <dbReference type="HAMAP-Rule" id="MF_00133"/>
    </source>
</evidence>
<sequence>MRIRVDLKVDEIPRYWYNVLSDLPFKLDPPLDPKTKQPISPDMLSAIFPMPLIEQEVTDKREIPIPEPVLEEYAVFRPTPLFRATYLEEFLQTPARIYYKYEGASPTGSHKTNTALAQAYYNKISGTERLVTETGAGQWGSALCYSGAKFGLKVNVFMVKISYEQKPMRKYLMRLFDGDVVPSPSEKTSFGKSILASNSENPGSLGIAISEAIEITLSDSRTKYSLGSVLNHVLLHQTVIGLELKKQLEVLGEKPDVILGCHGGGSNFGGTVLPFIPDKLSGKEIKFVACEPTACPSLTRGRYDYDYGDTAGMTPLLKMYTLGKDFIPPKIHAGGLRYHGAAPIISRLVKEGLIEAVAFDQDEIFSAAKLFAKLEGIVPAPESSYAIAGAIREAKKAKEHNIPRVVVFNLSGHGLFDLTAYI</sequence>
<organism>
    <name type="scientific">Pseudothermotoga lettingae (strain ATCC BAA-301 / DSM 14385 / NBRC 107922 / TMO)</name>
    <name type="common">Thermotoga lettingae</name>
    <dbReference type="NCBI Taxonomy" id="416591"/>
    <lineage>
        <taxon>Bacteria</taxon>
        <taxon>Thermotogati</taxon>
        <taxon>Thermotogota</taxon>
        <taxon>Thermotogae</taxon>
        <taxon>Thermotogales</taxon>
        <taxon>Thermotogaceae</taxon>
        <taxon>Pseudothermotoga</taxon>
    </lineage>
</organism>
<gene>
    <name evidence="1" type="primary">trpB</name>
    <name type="ordered locus">Tlet_1887</name>
</gene>
<accession>A8F8F7</accession>
<comment type="function">
    <text evidence="1">The beta subunit is responsible for the synthesis of L-tryptophan from indole and L-serine.</text>
</comment>
<comment type="catalytic activity">
    <reaction evidence="1">
        <text>(1S,2R)-1-C-(indol-3-yl)glycerol 3-phosphate + L-serine = D-glyceraldehyde 3-phosphate + L-tryptophan + H2O</text>
        <dbReference type="Rhea" id="RHEA:10532"/>
        <dbReference type="ChEBI" id="CHEBI:15377"/>
        <dbReference type="ChEBI" id="CHEBI:33384"/>
        <dbReference type="ChEBI" id="CHEBI:57912"/>
        <dbReference type="ChEBI" id="CHEBI:58866"/>
        <dbReference type="ChEBI" id="CHEBI:59776"/>
        <dbReference type="EC" id="4.2.1.20"/>
    </reaction>
</comment>
<comment type="cofactor">
    <cofactor evidence="1">
        <name>pyridoxal 5'-phosphate</name>
        <dbReference type="ChEBI" id="CHEBI:597326"/>
    </cofactor>
</comment>
<comment type="pathway">
    <text evidence="1">Amino-acid biosynthesis; L-tryptophan biosynthesis; L-tryptophan from chorismate: step 5/5.</text>
</comment>
<comment type="subunit">
    <text evidence="1">Tetramer of two alpha and two beta chains.</text>
</comment>
<comment type="similarity">
    <text evidence="1">Belongs to the TrpB family.</text>
</comment>
<proteinExistence type="inferred from homology"/>
<keyword id="KW-0028">Amino-acid biosynthesis</keyword>
<keyword id="KW-0057">Aromatic amino acid biosynthesis</keyword>
<keyword id="KW-0456">Lyase</keyword>
<keyword id="KW-0663">Pyridoxal phosphate</keyword>
<keyword id="KW-1185">Reference proteome</keyword>
<keyword id="KW-0822">Tryptophan biosynthesis</keyword>
<feature type="chain" id="PRO_1000117765" description="Tryptophan synthase beta chain">
    <location>
        <begin position="1"/>
        <end position="422"/>
    </location>
</feature>
<feature type="modified residue" description="N6-(pyridoxal phosphate)lysine" evidence="1">
    <location>
        <position position="111"/>
    </location>
</feature>
<name>TRPB_PSELT</name>
<reference key="1">
    <citation type="submission" date="2007-08" db="EMBL/GenBank/DDBJ databases">
        <title>Complete sequence of Thermotoga lettingae TMO.</title>
        <authorList>
            <consortium name="US DOE Joint Genome Institute"/>
            <person name="Copeland A."/>
            <person name="Lucas S."/>
            <person name="Lapidus A."/>
            <person name="Barry K."/>
            <person name="Glavina del Rio T."/>
            <person name="Dalin E."/>
            <person name="Tice H."/>
            <person name="Pitluck S."/>
            <person name="Foster B."/>
            <person name="Bruce D."/>
            <person name="Schmutz J."/>
            <person name="Larimer F."/>
            <person name="Land M."/>
            <person name="Hauser L."/>
            <person name="Kyrpides N."/>
            <person name="Mikhailova N."/>
            <person name="Nelson K."/>
            <person name="Gogarten J.P."/>
            <person name="Noll K."/>
            <person name="Richardson P."/>
        </authorList>
    </citation>
    <scope>NUCLEOTIDE SEQUENCE [LARGE SCALE GENOMIC DNA]</scope>
    <source>
        <strain>ATCC BAA-301 / DSM 14385 / NBRC 107922 / TMO</strain>
    </source>
</reference>
<dbReference type="EC" id="4.2.1.20" evidence="1"/>
<dbReference type="EMBL" id="CP000812">
    <property type="protein sequence ID" value="ABV34441.1"/>
    <property type="molecule type" value="Genomic_DNA"/>
</dbReference>
<dbReference type="RefSeq" id="WP_012003917.1">
    <property type="nucleotide sequence ID" value="NZ_BSDV01000001.1"/>
</dbReference>
<dbReference type="SMR" id="A8F8F7"/>
<dbReference type="STRING" id="416591.Tlet_1887"/>
<dbReference type="KEGG" id="tle:Tlet_1887"/>
<dbReference type="eggNOG" id="COG1350">
    <property type="taxonomic scope" value="Bacteria"/>
</dbReference>
<dbReference type="HOGENOM" id="CLU_042858_1_0_0"/>
<dbReference type="OrthoDB" id="9766131at2"/>
<dbReference type="UniPathway" id="UPA00035">
    <property type="reaction ID" value="UER00044"/>
</dbReference>
<dbReference type="Proteomes" id="UP000002016">
    <property type="component" value="Chromosome"/>
</dbReference>
<dbReference type="GO" id="GO:0005737">
    <property type="term" value="C:cytoplasm"/>
    <property type="evidence" value="ECO:0007669"/>
    <property type="project" value="TreeGrafter"/>
</dbReference>
<dbReference type="GO" id="GO:0052684">
    <property type="term" value="F:L-serine hydro-lyase (adding indole, L-tryptophan-forming) activity"/>
    <property type="evidence" value="ECO:0007669"/>
    <property type="project" value="TreeGrafter"/>
</dbReference>
<dbReference type="GO" id="GO:0030170">
    <property type="term" value="F:pyridoxal phosphate binding"/>
    <property type="evidence" value="ECO:0007669"/>
    <property type="project" value="InterPro"/>
</dbReference>
<dbReference type="GO" id="GO:0004834">
    <property type="term" value="F:tryptophan synthase activity"/>
    <property type="evidence" value="ECO:0007669"/>
    <property type="project" value="UniProtKB-UniRule"/>
</dbReference>
<dbReference type="CDD" id="cd06446">
    <property type="entry name" value="Trp-synth_B"/>
    <property type="match status" value="1"/>
</dbReference>
<dbReference type="Gene3D" id="3.40.50.1100">
    <property type="match status" value="2"/>
</dbReference>
<dbReference type="HAMAP" id="MF_00133">
    <property type="entry name" value="Trp_synth_beta"/>
    <property type="match status" value="1"/>
</dbReference>
<dbReference type="InterPro" id="IPR006316">
    <property type="entry name" value="Trp_synth_b-like"/>
</dbReference>
<dbReference type="InterPro" id="IPR006653">
    <property type="entry name" value="Trp_synth_b_CS"/>
</dbReference>
<dbReference type="InterPro" id="IPR006654">
    <property type="entry name" value="Trp_synth_beta"/>
</dbReference>
<dbReference type="InterPro" id="IPR023026">
    <property type="entry name" value="Trp_synth_beta/beta-like"/>
</dbReference>
<dbReference type="InterPro" id="IPR001926">
    <property type="entry name" value="TrpB-like_PALP"/>
</dbReference>
<dbReference type="InterPro" id="IPR036052">
    <property type="entry name" value="TrpB-like_PALP_sf"/>
</dbReference>
<dbReference type="NCBIfam" id="NF009057">
    <property type="entry name" value="PRK12391.1"/>
    <property type="match status" value="1"/>
</dbReference>
<dbReference type="NCBIfam" id="TIGR01415">
    <property type="entry name" value="trpB_rel"/>
    <property type="match status" value="1"/>
</dbReference>
<dbReference type="PANTHER" id="PTHR48077:SF6">
    <property type="entry name" value="TRYPTOPHAN SYNTHASE"/>
    <property type="match status" value="1"/>
</dbReference>
<dbReference type="PANTHER" id="PTHR48077">
    <property type="entry name" value="TRYPTOPHAN SYNTHASE-RELATED"/>
    <property type="match status" value="1"/>
</dbReference>
<dbReference type="Pfam" id="PF00291">
    <property type="entry name" value="PALP"/>
    <property type="match status" value="1"/>
</dbReference>
<dbReference type="PIRSF" id="PIRSF001413">
    <property type="entry name" value="Trp_syn_beta"/>
    <property type="match status" value="1"/>
</dbReference>
<dbReference type="PIRSF" id="PIRSF500824">
    <property type="entry name" value="TrpB_prok"/>
    <property type="match status" value="1"/>
</dbReference>
<dbReference type="SUPFAM" id="SSF53686">
    <property type="entry name" value="Tryptophan synthase beta subunit-like PLP-dependent enzymes"/>
    <property type="match status" value="1"/>
</dbReference>
<dbReference type="PROSITE" id="PS00168">
    <property type="entry name" value="TRP_SYNTHASE_BETA"/>
    <property type="match status" value="1"/>
</dbReference>
<protein>
    <recommendedName>
        <fullName evidence="1">Tryptophan synthase beta chain</fullName>
        <ecNumber evidence="1">4.2.1.20</ecNumber>
    </recommendedName>
</protein>